<dbReference type="EC" id="2.5.1.39" evidence="1"/>
<dbReference type="EMBL" id="CP000038">
    <property type="protein sequence ID" value="AAZ90718.1"/>
    <property type="molecule type" value="Genomic_DNA"/>
</dbReference>
<dbReference type="RefSeq" id="WP_000455227.1">
    <property type="nucleotide sequence ID" value="NC_007384.1"/>
</dbReference>
<dbReference type="SMR" id="Q3YUU4"/>
<dbReference type="GeneID" id="93777791"/>
<dbReference type="KEGG" id="ssn:SSON_4220"/>
<dbReference type="HOGENOM" id="CLU_034879_1_0_6"/>
<dbReference type="UniPathway" id="UPA00232"/>
<dbReference type="Proteomes" id="UP000002529">
    <property type="component" value="Chromosome"/>
</dbReference>
<dbReference type="GO" id="GO:0005886">
    <property type="term" value="C:plasma membrane"/>
    <property type="evidence" value="ECO:0007669"/>
    <property type="project" value="UniProtKB-SubCell"/>
</dbReference>
<dbReference type="GO" id="GO:0008412">
    <property type="term" value="F:4-hydroxybenzoate polyprenyltransferase activity"/>
    <property type="evidence" value="ECO:0007669"/>
    <property type="project" value="UniProtKB-UniRule"/>
</dbReference>
<dbReference type="GO" id="GO:0006744">
    <property type="term" value="P:ubiquinone biosynthetic process"/>
    <property type="evidence" value="ECO:0007669"/>
    <property type="project" value="UniProtKB-UniRule"/>
</dbReference>
<dbReference type="CDD" id="cd13959">
    <property type="entry name" value="PT_UbiA_COQ2"/>
    <property type="match status" value="1"/>
</dbReference>
<dbReference type="FunFam" id="1.10.357.140:FF:000002">
    <property type="entry name" value="4-hydroxybenzoate octaprenyltransferase"/>
    <property type="match status" value="1"/>
</dbReference>
<dbReference type="FunFam" id="1.20.120.1780:FF:000001">
    <property type="entry name" value="4-hydroxybenzoate octaprenyltransferase"/>
    <property type="match status" value="1"/>
</dbReference>
<dbReference type="Gene3D" id="1.10.357.140">
    <property type="entry name" value="UbiA prenyltransferase"/>
    <property type="match status" value="1"/>
</dbReference>
<dbReference type="Gene3D" id="1.20.120.1780">
    <property type="entry name" value="UbiA prenyltransferase"/>
    <property type="match status" value="1"/>
</dbReference>
<dbReference type="HAMAP" id="MF_01635">
    <property type="entry name" value="UbiA"/>
    <property type="match status" value="1"/>
</dbReference>
<dbReference type="InterPro" id="IPR006370">
    <property type="entry name" value="HB_polyprenyltransferase-like"/>
</dbReference>
<dbReference type="InterPro" id="IPR039653">
    <property type="entry name" value="Prenyltransferase"/>
</dbReference>
<dbReference type="InterPro" id="IPR000537">
    <property type="entry name" value="UbiA_prenyltransferase"/>
</dbReference>
<dbReference type="InterPro" id="IPR030470">
    <property type="entry name" value="UbiA_prenylTrfase_CS"/>
</dbReference>
<dbReference type="InterPro" id="IPR044878">
    <property type="entry name" value="UbiA_sf"/>
</dbReference>
<dbReference type="NCBIfam" id="TIGR01474">
    <property type="entry name" value="ubiA_proteo"/>
    <property type="match status" value="1"/>
</dbReference>
<dbReference type="PANTHER" id="PTHR11048:SF28">
    <property type="entry name" value="4-HYDROXYBENZOATE POLYPRENYLTRANSFERASE, MITOCHONDRIAL"/>
    <property type="match status" value="1"/>
</dbReference>
<dbReference type="PANTHER" id="PTHR11048">
    <property type="entry name" value="PRENYLTRANSFERASES"/>
    <property type="match status" value="1"/>
</dbReference>
<dbReference type="Pfam" id="PF01040">
    <property type="entry name" value="UbiA"/>
    <property type="match status" value="1"/>
</dbReference>
<dbReference type="PROSITE" id="PS00943">
    <property type="entry name" value="UBIA"/>
    <property type="match status" value="1"/>
</dbReference>
<feature type="chain" id="PRO_0000262845" description="4-hydroxybenzoate octaprenyltransferase">
    <location>
        <begin position="1"/>
        <end position="290"/>
    </location>
</feature>
<feature type="transmembrane region" description="Helical" evidence="1">
    <location>
        <begin position="23"/>
        <end position="43"/>
    </location>
</feature>
<feature type="transmembrane region" description="Helical" evidence="1">
    <location>
        <begin position="46"/>
        <end position="66"/>
    </location>
</feature>
<feature type="transmembrane region" description="Helical" evidence="1">
    <location>
        <begin position="99"/>
        <end position="119"/>
    </location>
</feature>
<feature type="transmembrane region" description="Helical" evidence="1">
    <location>
        <begin position="141"/>
        <end position="161"/>
    </location>
</feature>
<feature type="transmembrane region" description="Helical" evidence="1">
    <location>
        <begin position="163"/>
        <end position="183"/>
    </location>
</feature>
<feature type="transmembrane region" description="Helical" evidence="1">
    <location>
        <begin position="213"/>
        <end position="233"/>
    </location>
</feature>
<feature type="transmembrane region" description="Helical" evidence="1">
    <location>
        <begin position="234"/>
        <end position="254"/>
    </location>
</feature>
<feature type="transmembrane region" description="Helical" evidence="1">
    <location>
        <begin position="268"/>
        <end position="288"/>
    </location>
</feature>
<reference key="1">
    <citation type="journal article" date="2005" name="Nucleic Acids Res.">
        <title>Genome dynamics and diversity of Shigella species, the etiologic agents of bacillary dysentery.</title>
        <authorList>
            <person name="Yang F."/>
            <person name="Yang J."/>
            <person name="Zhang X."/>
            <person name="Chen L."/>
            <person name="Jiang Y."/>
            <person name="Yan Y."/>
            <person name="Tang X."/>
            <person name="Wang J."/>
            <person name="Xiong Z."/>
            <person name="Dong J."/>
            <person name="Xue Y."/>
            <person name="Zhu Y."/>
            <person name="Xu X."/>
            <person name="Sun L."/>
            <person name="Chen S."/>
            <person name="Nie H."/>
            <person name="Peng J."/>
            <person name="Xu J."/>
            <person name="Wang Y."/>
            <person name="Yuan Z."/>
            <person name="Wen Y."/>
            <person name="Yao Z."/>
            <person name="Shen Y."/>
            <person name="Qiang B."/>
            <person name="Hou Y."/>
            <person name="Yu J."/>
            <person name="Jin Q."/>
        </authorList>
    </citation>
    <scope>NUCLEOTIDE SEQUENCE [LARGE SCALE GENOMIC DNA]</scope>
    <source>
        <strain>Ss046</strain>
    </source>
</reference>
<evidence type="ECO:0000255" key="1">
    <source>
        <dbReference type="HAMAP-Rule" id="MF_01635"/>
    </source>
</evidence>
<sequence length="290" mass="32512">MEWSLTQNKLLAFHRLMRTDKPIGALLLLWPTLWALWVATPGVPQLWILAVFVAGVWLMRAAGCVVNDYADRKFDGHVKRTANRPLPSGAVTEKEARALFVVLVLISFLLVLTLNTMTILLSIAALALAWVYPFMKRYTHLPQVVLGAAFGWSIPMAFAAVSESVPLSCWLMFLANILWAVAYDTQYAMVDRDDDVKIGIKSTAILFGQYDKLIIGILQIGVLALMAIIGELNGLGWGYYWSILVAGALFVYQQKLIANREREACFKAFMNNNYVGLVLFLGLAMSYWHF</sequence>
<keyword id="KW-0997">Cell inner membrane</keyword>
<keyword id="KW-1003">Cell membrane</keyword>
<keyword id="KW-0460">Magnesium</keyword>
<keyword id="KW-0472">Membrane</keyword>
<keyword id="KW-1185">Reference proteome</keyword>
<keyword id="KW-0808">Transferase</keyword>
<keyword id="KW-0812">Transmembrane</keyword>
<keyword id="KW-1133">Transmembrane helix</keyword>
<keyword id="KW-0831">Ubiquinone biosynthesis</keyword>
<organism>
    <name type="scientific">Shigella sonnei (strain Ss046)</name>
    <dbReference type="NCBI Taxonomy" id="300269"/>
    <lineage>
        <taxon>Bacteria</taxon>
        <taxon>Pseudomonadati</taxon>
        <taxon>Pseudomonadota</taxon>
        <taxon>Gammaproteobacteria</taxon>
        <taxon>Enterobacterales</taxon>
        <taxon>Enterobacteriaceae</taxon>
        <taxon>Shigella</taxon>
    </lineage>
</organism>
<comment type="function">
    <text evidence="1">Catalyzes the prenylation of para-hydroxybenzoate (PHB) with an all-trans polyprenyl group. Mediates the second step in the final reaction sequence of ubiquinone-8 (UQ-8) biosynthesis, which is the condensation of the polyisoprenoid side chain with PHB, generating the first membrane-bound Q intermediate 3-octaprenyl-4-hydroxybenzoate.</text>
</comment>
<comment type="catalytic activity">
    <reaction evidence="1">
        <text>all-trans-octaprenyl diphosphate + 4-hydroxybenzoate = 4-hydroxy-3-(all-trans-octaprenyl)benzoate + diphosphate</text>
        <dbReference type="Rhea" id="RHEA:27782"/>
        <dbReference type="ChEBI" id="CHEBI:1617"/>
        <dbReference type="ChEBI" id="CHEBI:17879"/>
        <dbReference type="ChEBI" id="CHEBI:33019"/>
        <dbReference type="ChEBI" id="CHEBI:57711"/>
        <dbReference type="EC" id="2.5.1.39"/>
    </reaction>
</comment>
<comment type="cofactor">
    <cofactor evidence="1">
        <name>Mg(2+)</name>
        <dbReference type="ChEBI" id="CHEBI:18420"/>
    </cofactor>
</comment>
<comment type="pathway">
    <text evidence="1">Cofactor biosynthesis; ubiquinone biosynthesis.</text>
</comment>
<comment type="subcellular location">
    <subcellularLocation>
        <location evidence="1">Cell inner membrane</location>
        <topology evidence="1">Multi-pass membrane protein</topology>
    </subcellularLocation>
</comment>
<comment type="similarity">
    <text evidence="1">Belongs to the UbiA prenyltransferase family.</text>
</comment>
<name>UBIA_SHISS</name>
<gene>
    <name evidence="1" type="primary">ubiA</name>
    <name type="ordered locus">SSON_4220</name>
</gene>
<protein>
    <recommendedName>
        <fullName evidence="1">4-hydroxybenzoate octaprenyltransferase</fullName>
        <ecNumber evidence="1">2.5.1.39</ecNumber>
    </recommendedName>
    <alternativeName>
        <fullName evidence="1">4-HB polyprenyltransferase</fullName>
    </alternativeName>
</protein>
<accession>Q3YUU4</accession>
<proteinExistence type="inferred from homology"/>